<comment type="function">
    <text evidence="1">Assembles around the rod to form the L-ring and probably protects the motor/basal body from shearing forces during rotation.</text>
</comment>
<comment type="subunit">
    <text evidence="1">The basal body constitutes a major portion of the flagellar organelle and consists of four rings (L,P,S, and M) mounted on a central rod.</text>
</comment>
<comment type="subcellular location">
    <subcellularLocation>
        <location evidence="1">Cell outer membrane</location>
    </subcellularLocation>
    <subcellularLocation>
        <location evidence="1">Bacterial flagellum basal body</location>
    </subcellularLocation>
</comment>
<comment type="similarity">
    <text evidence="4">Belongs to the FlgH family.</text>
</comment>
<name>FLGH_HELPJ</name>
<proteinExistence type="inferred from homology"/>
<sequence>MKKALYLGAVAFGVVFSMASANEPNIDFNPPNYVEETPSKEFIPELNKLGSLFGQGERPLFADRRAMKPNDLITIVVSEKASANYSSSKDYKSASGGNSTPPRLTYNGLDERKKKEAEYLDDKNNYNFTKSSNNTNFKGGGSQKKSEDLEIVLSARIIKVLENGNYFIYGNKEVLVDGEKQILKVSGVIRPYDIERNNTIQSKFLADAKIEYTNLGHLSDSNKKKFAADAMETQMPY</sequence>
<dbReference type="EMBL" id="AE001439">
    <property type="protein sequence ID" value="AAD05882.1"/>
    <property type="molecule type" value="Genomic_DNA"/>
</dbReference>
<dbReference type="PIR" id="F71948">
    <property type="entry name" value="F71948"/>
</dbReference>
<dbReference type="RefSeq" id="WP_000709978.1">
    <property type="nucleotide sequence ID" value="NZ_CP011330.1"/>
</dbReference>
<dbReference type="SMR" id="Q9ZMB3"/>
<dbReference type="KEGG" id="hpj:jhp_0308"/>
<dbReference type="PATRIC" id="fig|85963.30.peg.705"/>
<dbReference type="eggNOG" id="COG2063">
    <property type="taxonomic scope" value="Bacteria"/>
</dbReference>
<dbReference type="Proteomes" id="UP000000804">
    <property type="component" value="Chromosome"/>
</dbReference>
<dbReference type="GO" id="GO:0009427">
    <property type="term" value="C:bacterial-type flagellum basal body, distal rod, L ring"/>
    <property type="evidence" value="ECO:0007669"/>
    <property type="project" value="InterPro"/>
</dbReference>
<dbReference type="GO" id="GO:0009279">
    <property type="term" value="C:cell outer membrane"/>
    <property type="evidence" value="ECO:0007669"/>
    <property type="project" value="UniProtKB-SubCell"/>
</dbReference>
<dbReference type="GO" id="GO:0003774">
    <property type="term" value="F:cytoskeletal motor activity"/>
    <property type="evidence" value="ECO:0007669"/>
    <property type="project" value="InterPro"/>
</dbReference>
<dbReference type="GO" id="GO:0071973">
    <property type="term" value="P:bacterial-type flagellum-dependent cell motility"/>
    <property type="evidence" value="ECO:0007669"/>
    <property type="project" value="InterPro"/>
</dbReference>
<dbReference type="HAMAP" id="MF_00415">
    <property type="entry name" value="FlgH"/>
    <property type="match status" value="1"/>
</dbReference>
<dbReference type="InterPro" id="IPR000527">
    <property type="entry name" value="Flag_Lring"/>
</dbReference>
<dbReference type="NCBIfam" id="NF001303">
    <property type="entry name" value="PRK00249.1-3"/>
    <property type="match status" value="1"/>
</dbReference>
<dbReference type="PANTHER" id="PTHR34933">
    <property type="entry name" value="FLAGELLAR L-RING PROTEIN"/>
    <property type="match status" value="1"/>
</dbReference>
<dbReference type="PANTHER" id="PTHR34933:SF1">
    <property type="entry name" value="FLAGELLAR L-RING PROTEIN"/>
    <property type="match status" value="1"/>
</dbReference>
<dbReference type="Pfam" id="PF02107">
    <property type="entry name" value="FlgH"/>
    <property type="match status" value="1"/>
</dbReference>
<dbReference type="PRINTS" id="PR01008">
    <property type="entry name" value="FLGLRINGFLGH"/>
</dbReference>
<gene>
    <name type="primary">flgH</name>
    <name type="ordered locus">jhp_0308</name>
</gene>
<reference key="1">
    <citation type="journal article" date="1999" name="Nature">
        <title>Genomic sequence comparison of two unrelated isolates of the human gastric pathogen Helicobacter pylori.</title>
        <authorList>
            <person name="Alm R.A."/>
            <person name="Ling L.-S.L."/>
            <person name="Moir D.T."/>
            <person name="King B.L."/>
            <person name="Brown E.D."/>
            <person name="Doig P.C."/>
            <person name="Smith D.R."/>
            <person name="Noonan B."/>
            <person name="Guild B.C."/>
            <person name="deJonge B.L."/>
            <person name="Carmel G."/>
            <person name="Tummino P.J."/>
            <person name="Caruso A."/>
            <person name="Uria-Nickelsen M."/>
            <person name="Mills D.M."/>
            <person name="Ives C."/>
            <person name="Gibson R."/>
            <person name="Merberg D."/>
            <person name="Mills S.D."/>
            <person name="Jiang Q."/>
            <person name="Taylor D.E."/>
            <person name="Vovis G.F."/>
            <person name="Trust T.J."/>
        </authorList>
    </citation>
    <scope>NUCLEOTIDE SEQUENCE [LARGE SCALE GENOMIC DNA]</scope>
    <source>
        <strain>J99 / ATCC 700824</strain>
    </source>
</reference>
<keyword id="KW-0975">Bacterial flagellum</keyword>
<keyword id="KW-0998">Cell outer membrane</keyword>
<keyword id="KW-0472">Membrane</keyword>
<keyword id="KW-0732">Signal</keyword>
<feature type="signal peptide" evidence="2">
    <location>
        <begin position="1"/>
        <end position="21"/>
    </location>
</feature>
<feature type="chain" id="PRO_0000009450" description="Flagellar L-ring protein">
    <location>
        <begin position="22"/>
        <end position="237"/>
    </location>
</feature>
<feature type="region of interest" description="Disordered" evidence="3">
    <location>
        <begin position="87"/>
        <end position="111"/>
    </location>
</feature>
<protein>
    <recommendedName>
        <fullName>Flagellar L-ring protein</fullName>
    </recommendedName>
    <alternativeName>
        <fullName>Basal body L-ring protein</fullName>
    </alternativeName>
</protein>
<evidence type="ECO:0000250" key="1"/>
<evidence type="ECO:0000255" key="2"/>
<evidence type="ECO:0000256" key="3">
    <source>
        <dbReference type="SAM" id="MobiDB-lite"/>
    </source>
</evidence>
<evidence type="ECO:0000305" key="4"/>
<accession>Q9ZMB3</accession>
<organism>
    <name type="scientific">Helicobacter pylori (strain J99 / ATCC 700824)</name>
    <name type="common">Campylobacter pylori J99</name>
    <dbReference type="NCBI Taxonomy" id="85963"/>
    <lineage>
        <taxon>Bacteria</taxon>
        <taxon>Pseudomonadati</taxon>
        <taxon>Campylobacterota</taxon>
        <taxon>Epsilonproteobacteria</taxon>
        <taxon>Campylobacterales</taxon>
        <taxon>Helicobacteraceae</taxon>
        <taxon>Helicobacter</taxon>
    </lineage>
</organism>